<reference key="1">
    <citation type="journal article" date="2010" name="Appl. Environ. Microbiol.">
        <title>The genome sequence of Psychrobacter arcticus 273-4, a psychroactive Siberian permafrost bacterium, reveals mechanisms for adaptation to low-temperature growth.</title>
        <authorList>
            <person name="Ayala-del-Rio H.L."/>
            <person name="Chain P.S."/>
            <person name="Grzymski J.J."/>
            <person name="Ponder M.A."/>
            <person name="Ivanova N."/>
            <person name="Bergholz P.W."/>
            <person name="Di Bartolo G."/>
            <person name="Hauser L."/>
            <person name="Land M."/>
            <person name="Bakermans C."/>
            <person name="Rodrigues D."/>
            <person name="Klappenbach J."/>
            <person name="Zarka D."/>
            <person name="Larimer F."/>
            <person name="Richardson P."/>
            <person name="Murray A."/>
            <person name="Thomashow M."/>
            <person name="Tiedje J.M."/>
        </authorList>
    </citation>
    <scope>NUCLEOTIDE SEQUENCE [LARGE SCALE GENOMIC DNA]</scope>
    <source>
        <strain>DSM 17307 / VKM B-2377 / 273-4</strain>
    </source>
</reference>
<gene>
    <name evidence="1" type="primary">lpxD</name>
    <name type="ordered locus">Psyc_1528</name>
</gene>
<organism>
    <name type="scientific">Psychrobacter arcticus (strain DSM 17307 / VKM B-2377 / 273-4)</name>
    <dbReference type="NCBI Taxonomy" id="259536"/>
    <lineage>
        <taxon>Bacteria</taxon>
        <taxon>Pseudomonadati</taxon>
        <taxon>Pseudomonadota</taxon>
        <taxon>Gammaproteobacteria</taxon>
        <taxon>Moraxellales</taxon>
        <taxon>Moraxellaceae</taxon>
        <taxon>Psychrobacter</taxon>
    </lineage>
</organism>
<name>LPXD_PSYA2</name>
<comment type="function">
    <text evidence="1">Catalyzes the N-acylation of UDP-3-O-acylglucosamine using 3-hydroxyacyl-ACP as the acyl donor. Is involved in the biosynthesis of lipid A, a phosphorylated glycolipid that anchors the lipopolysaccharide to the outer membrane of the cell.</text>
</comment>
<comment type="catalytic activity">
    <reaction evidence="1">
        <text>a UDP-3-O-[(3R)-3-hydroxyacyl]-alpha-D-glucosamine + a (3R)-hydroxyacyl-[ACP] = a UDP-2-N,3-O-bis[(3R)-3-hydroxyacyl]-alpha-D-glucosamine + holo-[ACP] + H(+)</text>
        <dbReference type="Rhea" id="RHEA:53836"/>
        <dbReference type="Rhea" id="RHEA-COMP:9685"/>
        <dbReference type="Rhea" id="RHEA-COMP:9945"/>
        <dbReference type="ChEBI" id="CHEBI:15378"/>
        <dbReference type="ChEBI" id="CHEBI:64479"/>
        <dbReference type="ChEBI" id="CHEBI:78827"/>
        <dbReference type="ChEBI" id="CHEBI:137740"/>
        <dbReference type="ChEBI" id="CHEBI:137748"/>
        <dbReference type="EC" id="2.3.1.191"/>
    </reaction>
</comment>
<comment type="pathway">
    <text evidence="1">Bacterial outer membrane biogenesis; LPS lipid A biosynthesis.</text>
</comment>
<comment type="subunit">
    <text evidence="1">Homotrimer.</text>
</comment>
<comment type="similarity">
    <text evidence="1">Belongs to the transferase hexapeptide repeat family. LpxD subfamily.</text>
</comment>
<comment type="sequence caution" evidence="2">
    <conflict type="erroneous initiation">
        <sequence resource="EMBL-CDS" id="AAZ19376"/>
    </conflict>
</comment>
<protein>
    <recommendedName>
        <fullName evidence="1">UDP-3-O-acylglucosamine N-acyltransferase</fullName>
        <ecNumber evidence="1">2.3.1.191</ecNumber>
    </recommendedName>
</protein>
<accession>Q4FRI2</accession>
<sequence>MITIEQLISQIEQRQPVLNKAELNAEQRRLSLKGIGNLMMANRQQLSFLANPHYLSSLANTHAGAVLITAEHHNEAPNDTVALIVASPYLAYASVSQLFARQPSVSGIHPTAVIADSAVIGNQVTIGAFCVIGEQVQIGDRSALQAHVVVEDNTAIGTDCVIKPQVVIGHDCIIGNHVRLHAGVSIGSEGFGFAPTRNPSVTGWERIAQLGRVLIGNHVRIGSQTCIDRGAIDDTVIGNHVIIDNLVQVAHNVRIGDGTAIAAHTGIAGSTSIGKRCIIGGAVGITGHIDITDDVTLSGMTMVTKSITTAGSYSSGTAAMPTTNWRRAAVRFRQLGRD</sequence>
<feature type="chain" id="PRO_0000264417" description="UDP-3-O-acylglucosamine N-acyltransferase">
    <location>
        <begin position="1"/>
        <end position="338"/>
    </location>
</feature>
<feature type="active site" description="Proton acceptor" evidence="1">
    <location>
        <position position="251"/>
    </location>
</feature>
<proteinExistence type="inferred from homology"/>
<keyword id="KW-0012">Acyltransferase</keyword>
<keyword id="KW-0441">Lipid A biosynthesis</keyword>
<keyword id="KW-0444">Lipid biosynthesis</keyword>
<keyword id="KW-0443">Lipid metabolism</keyword>
<keyword id="KW-1185">Reference proteome</keyword>
<keyword id="KW-0677">Repeat</keyword>
<keyword id="KW-0808">Transferase</keyword>
<dbReference type="EC" id="2.3.1.191" evidence="1"/>
<dbReference type="EMBL" id="CP000082">
    <property type="protein sequence ID" value="AAZ19376.1"/>
    <property type="status" value="ALT_INIT"/>
    <property type="molecule type" value="Genomic_DNA"/>
</dbReference>
<dbReference type="RefSeq" id="WP_041757730.1">
    <property type="nucleotide sequence ID" value="NC_007204.1"/>
</dbReference>
<dbReference type="SMR" id="Q4FRI2"/>
<dbReference type="STRING" id="259536.Psyc_1528"/>
<dbReference type="KEGG" id="par:Psyc_1528"/>
<dbReference type="eggNOG" id="COG1044">
    <property type="taxonomic scope" value="Bacteria"/>
</dbReference>
<dbReference type="HOGENOM" id="CLU_049865_0_1_6"/>
<dbReference type="OrthoDB" id="9784739at2"/>
<dbReference type="UniPathway" id="UPA00973"/>
<dbReference type="Proteomes" id="UP000000546">
    <property type="component" value="Chromosome"/>
</dbReference>
<dbReference type="GO" id="GO:0016020">
    <property type="term" value="C:membrane"/>
    <property type="evidence" value="ECO:0007669"/>
    <property type="project" value="GOC"/>
</dbReference>
<dbReference type="GO" id="GO:0016410">
    <property type="term" value="F:N-acyltransferase activity"/>
    <property type="evidence" value="ECO:0007669"/>
    <property type="project" value="InterPro"/>
</dbReference>
<dbReference type="GO" id="GO:0009245">
    <property type="term" value="P:lipid A biosynthetic process"/>
    <property type="evidence" value="ECO:0007669"/>
    <property type="project" value="UniProtKB-UniRule"/>
</dbReference>
<dbReference type="CDD" id="cd03352">
    <property type="entry name" value="LbH_LpxD"/>
    <property type="match status" value="1"/>
</dbReference>
<dbReference type="Gene3D" id="2.160.10.10">
    <property type="entry name" value="Hexapeptide repeat proteins"/>
    <property type="match status" value="1"/>
</dbReference>
<dbReference type="Gene3D" id="3.40.1390.10">
    <property type="entry name" value="MurE/MurF, N-terminal domain"/>
    <property type="match status" value="1"/>
</dbReference>
<dbReference type="HAMAP" id="MF_00523">
    <property type="entry name" value="LpxD"/>
    <property type="match status" value="1"/>
</dbReference>
<dbReference type="InterPro" id="IPR001451">
    <property type="entry name" value="Hexapep"/>
</dbReference>
<dbReference type="InterPro" id="IPR018357">
    <property type="entry name" value="Hexapep_transf_CS"/>
</dbReference>
<dbReference type="InterPro" id="IPR007691">
    <property type="entry name" value="LpxD"/>
</dbReference>
<dbReference type="InterPro" id="IPR011004">
    <property type="entry name" value="Trimer_LpxA-like_sf"/>
</dbReference>
<dbReference type="InterPro" id="IPR020573">
    <property type="entry name" value="UDP_GlcNAc_AcTrfase_non-rep"/>
</dbReference>
<dbReference type="NCBIfam" id="TIGR01853">
    <property type="entry name" value="lipid_A_lpxD"/>
    <property type="match status" value="1"/>
</dbReference>
<dbReference type="NCBIfam" id="NF002060">
    <property type="entry name" value="PRK00892.1"/>
    <property type="match status" value="1"/>
</dbReference>
<dbReference type="PANTHER" id="PTHR43378">
    <property type="entry name" value="UDP-3-O-ACYLGLUCOSAMINE N-ACYLTRANSFERASE"/>
    <property type="match status" value="1"/>
</dbReference>
<dbReference type="PANTHER" id="PTHR43378:SF2">
    <property type="entry name" value="UDP-3-O-ACYLGLUCOSAMINE N-ACYLTRANSFERASE 1, MITOCHONDRIAL-RELATED"/>
    <property type="match status" value="1"/>
</dbReference>
<dbReference type="Pfam" id="PF00132">
    <property type="entry name" value="Hexapep"/>
    <property type="match status" value="3"/>
</dbReference>
<dbReference type="Pfam" id="PF04613">
    <property type="entry name" value="LpxD"/>
    <property type="match status" value="1"/>
</dbReference>
<dbReference type="SUPFAM" id="SSF51161">
    <property type="entry name" value="Trimeric LpxA-like enzymes"/>
    <property type="match status" value="1"/>
</dbReference>
<dbReference type="PROSITE" id="PS00101">
    <property type="entry name" value="HEXAPEP_TRANSFERASES"/>
    <property type="match status" value="1"/>
</dbReference>
<evidence type="ECO:0000255" key="1">
    <source>
        <dbReference type="HAMAP-Rule" id="MF_00523"/>
    </source>
</evidence>
<evidence type="ECO:0000305" key="2"/>